<proteinExistence type="inferred from homology"/>
<sequence>MSPGPPAVGGVSPPVMVPGSAPPFQPTHQYFQHHYHQTPPGKLRDRSPRLSAEMRKNRDTATSSPASSGVSIQQRRGSTTQNSGVGSIGLPVLGGRGRGVMSDGHMQRTFHEAMRQRRTSLPANSLSLNGAKVTGSSLSEAKGLIADMLMNKELPGNVASCLRAVTMLLEQRPLPLNGLLNDFGLPSVVENPYGGESMVVGASKPRISNITFSTVTSATGLPTVPAEPNKARSSSYWKTEASPSNNNEHETPVDLLRKISVSRKESGTHVDTVVTTIDGQRYDTRELDTDPDLAETAVWSFPIFQMSRKHPQTILSRLTYNIFQQAELFRIFKVSPIKFFNFFHALEKGYWEIPYHNRIHAADVLHGCYYLSAHPVRSTFLTPKTPDSVLTPPHPHHQHSSIMSQLSTLELMALFTAAAMHDYDHPGRTNAFLVQVEDKKAILYNDRSVLENHHAAESWKLLNKPENHFIENLDPAEMKRFRYLVLEYILATDLKQHFEIIMTFTERLTEIDVQVETDRLLIGKLLIKMADINSPTKPYGLHRQWTDRICEEFYEQGDDERRRGLPITPYMDRGDAQVAKLQDSFIAHVVSPLATAMNECGLLPILPGLDTSELIINMEHNHRKWKEQIELENGGSYEAQITCNGGTAVNGVIEEESASTSDSPDPRRDSPLDSDLSQ</sequence>
<evidence type="ECO:0000250" key="1"/>
<evidence type="ECO:0000250" key="2">
    <source>
        <dbReference type="UniProtKB" id="P54750"/>
    </source>
</evidence>
<evidence type="ECO:0000255" key="3">
    <source>
        <dbReference type="PROSITE-ProRule" id="PRU01192"/>
    </source>
</evidence>
<evidence type="ECO:0000256" key="4">
    <source>
        <dbReference type="SAM" id="MobiDB-lite"/>
    </source>
</evidence>
<evidence type="ECO:0000303" key="5">
    <source>
    </source>
</evidence>
<evidence type="ECO:0000305" key="6"/>
<name>PDE3_CAEEL</name>
<dbReference type="EC" id="3.1.4.17"/>
<dbReference type="EMBL" id="Z93376">
    <property type="protein sequence ID" value="CAB07570.3"/>
    <property type="molecule type" value="Genomic_DNA"/>
</dbReference>
<dbReference type="EMBL" id="AL132949">
    <property type="protein sequence ID" value="CAB07570.3"/>
    <property type="status" value="JOINED"/>
    <property type="molecule type" value="Genomic_DNA"/>
</dbReference>
<dbReference type="EMBL" id="Z93376">
    <property type="protein sequence ID" value="CAD59146.3"/>
    <property type="molecule type" value="Genomic_DNA"/>
</dbReference>
<dbReference type="EMBL" id="Z82279">
    <property type="protein sequence ID" value="CAD59146.3"/>
    <property type="status" value="JOINED"/>
    <property type="molecule type" value="Genomic_DNA"/>
</dbReference>
<dbReference type="EMBL" id="AL132949">
    <property type="protein sequence ID" value="CAD59146.3"/>
    <property type="status" value="JOINED"/>
    <property type="molecule type" value="Genomic_DNA"/>
</dbReference>
<dbReference type="EMBL" id="Z93376">
    <property type="protein sequence ID" value="CAT01013.1"/>
    <property type="molecule type" value="Genomic_DNA"/>
</dbReference>
<dbReference type="EMBL" id="AL132949">
    <property type="protein sequence ID" value="CAT01013.1"/>
    <property type="status" value="JOINED"/>
    <property type="molecule type" value="Genomic_DNA"/>
</dbReference>
<dbReference type="EMBL" id="Z93376">
    <property type="protein sequence ID" value="CAT01014.1"/>
    <property type="molecule type" value="Genomic_DNA"/>
</dbReference>
<dbReference type="EMBL" id="AL132949">
    <property type="protein sequence ID" value="CAT01014.1"/>
    <property type="status" value="JOINED"/>
    <property type="molecule type" value="Genomic_DNA"/>
</dbReference>
<dbReference type="EMBL" id="Z93376">
    <property type="protein sequence ID" value="CBL43431.1"/>
    <property type="molecule type" value="Genomic_DNA"/>
</dbReference>
<dbReference type="EMBL" id="AL132949">
    <property type="protein sequence ID" value="CBL43431.1"/>
    <property type="status" value="JOINED"/>
    <property type="molecule type" value="Genomic_DNA"/>
</dbReference>
<dbReference type="EMBL" id="Z82279">
    <property type="protein sequence ID" value="CBL43431.1"/>
    <property type="status" value="JOINED"/>
    <property type="molecule type" value="Genomic_DNA"/>
</dbReference>
<dbReference type="PIR" id="T20399">
    <property type="entry name" value="T20399"/>
</dbReference>
<dbReference type="RefSeq" id="NP_001254452.1">
    <molecule id="Q8I0P7-4"/>
    <property type="nucleotide sequence ID" value="NM_001267523.2"/>
</dbReference>
<dbReference type="RefSeq" id="NP_001254453.1">
    <property type="nucleotide sequence ID" value="NM_001267524.1"/>
</dbReference>
<dbReference type="RefSeq" id="NP_001254454.1">
    <molecule id="Q8I0P7-5"/>
    <property type="nucleotide sequence ID" value="NM_001267525.3"/>
</dbReference>
<dbReference type="RefSeq" id="NP_001367248.1">
    <molecule id="Q8I0P7-1"/>
    <property type="nucleotide sequence ID" value="NM_001381668.1"/>
</dbReference>
<dbReference type="RefSeq" id="NP_001370153.1">
    <molecule id="Q8I0P7-3"/>
    <property type="nucleotide sequence ID" value="NM_001383996.1"/>
</dbReference>
<dbReference type="RefSeq" id="NP_497084.2">
    <molecule id="Q8I0P7-2"/>
    <property type="nucleotide sequence ID" value="NM_064683.5"/>
</dbReference>
<dbReference type="RefSeq" id="NP_871943.3">
    <property type="nucleotide sequence ID" value="NM_182143.3"/>
</dbReference>
<dbReference type="SMR" id="Q8I0P7"/>
<dbReference type="BioGRID" id="48784">
    <property type="interactions" value="2"/>
</dbReference>
<dbReference type="FunCoup" id="Q8I0P7">
    <property type="interactions" value="142"/>
</dbReference>
<dbReference type="IntAct" id="Q8I0P7">
    <property type="interactions" value="1"/>
</dbReference>
<dbReference type="STRING" id="6239.E01F3.1i.1"/>
<dbReference type="PaxDb" id="6239-E01F3.1i"/>
<dbReference type="PeptideAtlas" id="Q8I0P7"/>
<dbReference type="EnsemblMetazoa" id="E01F3.1a.1">
    <molecule id="Q8I0P7-2"/>
    <property type="protein sequence ID" value="E01F3.1a.1"/>
    <property type="gene ID" value="WBGene00008443"/>
</dbReference>
<dbReference type="EnsemblMetazoa" id="E01F3.1b.1">
    <molecule id="Q8I0P7-3"/>
    <property type="protein sequence ID" value="E01F3.1b.1"/>
    <property type="gene ID" value="WBGene00008443"/>
</dbReference>
<dbReference type="EnsemblMetazoa" id="E01F3.1c.1">
    <molecule id="Q8I0P7-4"/>
    <property type="protein sequence ID" value="E01F3.1c.1"/>
    <property type="gene ID" value="WBGene00008443"/>
</dbReference>
<dbReference type="EnsemblMetazoa" id="E01F3.1d.1">
    <molecule id="Q8I0P7-5"/>
    <property type="protein sequence ID" value="E01F3.1d.1"/>
    <property type="gene ID" value="WBGene00008443"/>
</dbReference>
<dbReference type="EnsemblMetazoa" id="E01F3.1e.1">
    <molecule id="Q8I0P7-1"/>
    <property type="protein sequence ID" value="E01F3.1e.1"/>
    <property type="gene ID" value="WBGene00008443"/>
</dbReference>
<dbReference type="GeneID" id="183981"/>
<dbReference type="KEGG" id="cel:CELE_E01F3.1"/>
<dbReference type="UCSC" id="E01F3.1b">
    <molecule id="Q8I0P7-1"/>
    <property type="organism name" value="c. elegans"/>
</dbReference>
<dbReference type="AGR" id="WB:WBGene00008443"/>
<dbReference type="CTD" id="183981"/>
<dbReference type="WormBase" id="E01F3.1a">
    <molecule id="Q8I0P7-2"/>
    <property type="protein sequence ID" value="CE32847"/>
    <property type="gene ID" value="WBGene00008443"/>
    <property type="gene designation" value="pde-3"/>
</dbReference>
<dbReference type="WormBase" id="E01F3.1b">
    <molecule id="Q8I0P7-3"/>
    <property type="protein sequence ID" value="CE43375"/>
    <property type="gene ID" value="WBGene00008443"/>
    <property type="gene designation" value="pde-3"/>
</dbReference>
<dbReference type="WormBase" id="E01F3.1c">
    <molecule id="Q8I0P7-4"/>
    <property type="protein sequence ID" value="CE43353"/>
    <property type="gene ID" value="WBGene00008443"/>
    <property type="gene designation" value="pde-3"/>
</dbReference>
<dbReference type="WormBase" id="E01F3.1d">
    <molecule id="Q8I0P7-5"/>
    <property type="protein sequence ID" value="CE43321"/>
    <property type="gene ID" value="WBGene00008443"/>
    <property type="gene designation" value="pde-3"/>
</dbReference>
<dbReference type="WormBase" id="E01F3.1e">
    <molecule id="Q8I0P7-1"/>
    <property type="protein sequence ID" value="CE44810"/>
    <property type="gene ID" value="WBGene00008443"/>
    <property type="gene designation" value="pde-3"/>
</dbReference>
<dbReference type="eggNOG" id="KOG3688">
    <property type="taxonomic scope" value="Eukaryota"/>
</dbReference>
<dbReference type="InParanoid" id="Q8I0P7"/>
<dbReference type="OMA" id="YYLTCHP"/>
<dbReference type="OrthoDB" id="189220at2759"/>
<dbReference type="PhylomeDB" id="Q8I0P7"/>
<dbReference type="Reactome" id="R-CEL-165160">
    <property type="pathway name" value="PDE3B signalling"/>
</dbReference>
<dbReference type="Reactome" id="R-CEL-418555">
    <property type="pathway name" value="G alpha (s) signalling events"/>
</dbReference>
<dbReference type="PRO" id="PR:Q8I0P7"/>
<dbReference type="Proteomes" id="UP000001940">
    <property type="component" value="Chromosome II"/>
</dbReference>
<dbReference type="Bgee" id="WBGene00008443">
    <property type="expression patterns" value="Expressed in larva and 3 other cell types or tissues"/>
</dbReference>
<dbReference type="ExpressionAtlas" id="Q8I0P7">
    <property type="expression patterns" value="baseline and differential"/>
</dbReference>
<dbReference type="GO" id="GO:0004115">
    <property type="term" value="F:3',5'-cyclic-AMP phosphodiesterase activity"/>
    <property type="evidence" value="ECO:0000318"/>
    <property type="project" value="GO_Central"/>
</dbReference>
<dbReference type="GO" id="GO:0047555">
    <property type="term" value="F:3',5'-cyclic-GMP phosphodiesterase activity"/>
    <property type="evidence" value="ECO:0000318"/>
    <property type="project" value="GO_Central"/>
</dbReference>
<dbReference type="GO" id="GO:0046872">
    <property type="term" value="F:metal ion binding"/>
    <property type="evidence" value="ECO:0007669"/>
    <property type="project" value="UniProtKB-KW"/>
</dbReference>
<dbReference type="GO" id="GO:0019933">
    <property type="term" value="P:cAMP-mediated signaling"/>
    <property type="evidence" value="ECO:0000318"/>
    <property type="project" value="GO_Central"/>
</dbReference>
<dbReference type="GO" id="GO:0007635">
    <property type="term" value="P:chemosensory behavior"/>
    <property type="evidence" value="ECO:0000316"/>
    <property type="project" value="UniProtKB"/>
</dbReference>
<dbReference type="GO" id="GO:0006935">
    <property type="term" value="P:chemotaxis"/>
    <property type="evidence" value="ECO:0000316"/>
    <property type="project" value="UniProtKB"/>
</dbReference>
<dbReference type="GO" id="GO:0008340">
    <property type="term" value="P:determination of adult lifespan"/>
    <property type="evidence" value="ECO:0000316"/>
    <property type="project" value="UniProtKB"/>
</dbReference>
<dbReference type="GO" id="GO:0010754">
    <property type="term" value="P:negative regulation of cGMP-mediated signaling"/>
    <property type="evidence" value="ECO:0000316"/>
    <property type="project" value="UniProtKB"/>
</dbReference>
<dbReference type="GO" id="GO:0007602">
    <property type="term" value="P:phototransduction"/>
    <property type="evidence" value="ECO:0000316"/>
    <property type="project" value="UniProtKB"/>
</dbReference>
<dbReference type="GO" id="GO:0010628">
    <property type="term" value="P:positive regulation of gene expression"/>
    <property type="evidence" value="ECO:0000316"/>
    <property type="project" value="UniProtKB"/>
</dbReference>
<dbReference type="GO" id="GO:0010446">
    <property type="term" value="P:response to alkaline pH"/>
    <property type="evidence" value="ECO:0000316"/>
    <property type="project" value="UniProtKB"/>
</dbReference>
<dbReference type="GO" id="GO:0042542">
    <property type="term" value="P:response to hydrogen peroxide"/>
    <property type="evidence" value="ECO:0000316"/>
    <property type="project" value="UniProtKB"/>
</dbReference>
<dbReference type="CDD" id="cd00077">
    <property type="entry name" value="HDc"/>
    <property type="match status" value="1"/>
</dbReference>
<dbReference type="FunFam" id="1.10.1300.10:FF:000018">
    <property type="entry name" value="Phosphodiesterase"/>
    <property type="match status" value="1"/>
</dbReference>
<dbReference type="Gene3D" id="1.10.1300.10">
    <property type="entry name" value="3'5'-cyclic nucleotide phosphodiesterase, catalytic domain"/>
    <property type="match status" value="1"/>
</dbReference>
<dbReference type="InterPro" id="IPR003607">
    <property type="entry name" value="HD/PDEase_dom"/>
</dbReference>
<dbReference type="InterPro" id="IPR023088">
    <property type="entry name" value="PDEase"/>
</dbReference>
<dbReference type="InterPro" id="IPR002073">
    <property type="entry name" value="PDEase_catalytic_dom"/>
</dbReference>
<dbReference type="InterPro" id="IPR036971">
    <property type="entry name" value="PDEase_catalytic_dom_sf"/>
</dbReference>
<dbReference type="InterPro" id="IPR023174">
    <property type="entry name" value="PDEase_CS"/>
</dbReference>
<dbReference type="PANTHER" id="PTHR11347">
    <property type="entry name" value="CYCLIC NUCLEOTIDE PHOSPHODIESTERASE"/>
    <property type="match status" value="1"/>
</dbReference>
<dbReference type="Pfam" id="PF00233">
    <property type="entry name" value="PDEase_I"/>
    <property type="match status" value="1"/>
</dbReference>
<dbReference type="PRINTS" id="PR00387">
    <property type="entry name" value="PDIESTERASE1"/>
</dbReference>
<dbReference type="SMART" id="SM00471">
    <property type="entry name" value="HDc"/>
    <property type="match status" value="1"/>
</dbReference>
<dbReference type="SUPFAM" id="SSF109604">
    <property type="entry name" value="HD-domain/PDEase-like"/>
    <property type="match status" value="1"/>
</dbReference>
<dbReference type="PROSITE" id="PS00126">
    <property type="entry name" value="PDEASE_I_1"/>
    <property type="match status" value="1"/>
</dbReference>
<dbReference type="PROSITE" id="PS51845">
    <property type="entry name" value="PDEASE_I_2"/>
    <property type="match status" value="1"/>
</dbReference>
<protein>
    <recommendedName>
        <fullName>Probable 3',5'-cyclic phosphodiesterase pde-3</fullName>
        <ecNumber>3.1.4.17</ecNumber>
    </recommendedName>
</protein>
<comment type="catalytic activity">
    <reaction evidence="2">
        <text>a nucleoside 3',5'-cyclic phosphate + H2O = a nucleoside 5'-phosphate + H(+)</text>
        <dbReference type="Rhea" id="RHEA:14653"/>
        <dbReference type="ChEBI" id="CHEBI:15377"/>
        <dbReference type="ChEBI" id="CHEBI:15378"/>
        <dbReference type="ChEBI" id="CHEBI:57867"/>
        <dbReference type="ChEBI" id="CHEBI:58464"/>
        <dbReference type="EC" id="3.1.4.17"/>
    </reaction>
</comment>
<comment type="cofactor">
    <cofactor evidence="1">
        <name>a divalent metal cation</name>
        <dbReference type="ChEBI" id="CHEBI:60240"/>
    </cofactor>
    <text evidence="1">Binds 2 divalent metal cations per subunit. Site 1 may preferentially bind zinc ions, while site 2 has a preference for magnesium and/or manganese ions.</text>
</comment>
<comment type="alternative products">
    <event type="alternative splicing"/>
    <isoform>
        <id>Q8I0P7-1</id>
        <name>e</name>
        <sequence type="displayed"/>
    </isoform>
    <isoform>
        <id>Q8I0P7-2</id>
        <name evidence="5">a</name>
        <sequence type="described" ref="VSP_053658 VSP_053664 VSP_053665"/>
    </isoform>
    <isoform>
        <id>Q8I0P7-3</id>
        <name>b</name>
        <sequence type="described" ref="VSP_053661"/>
    </isoform>
    <isoform>
        <id>Q8I0P7-4</id>
        <name>c</name>
        <sequence type="described" ref="VSP_053660 VSP_053662 VSP_053665"/>
    </isoform>
    <isoform>
        <id>Q8I0P7-5</id>
        <name>d</name>
        <sequence type="described" ref="VSP_053659 VSP_053663 VSP_053665"/>
    </isoform>
</comment>
<comment type="similarity">
    <text evidence="2">Belongs to the cyclic nucleotide phosphodiesterase family.</text>
</comment>
<feature type="chain" id="PRO_0000198846" description="Probable 3',5'-cyclic phosphodiesterase pde-3">
    <location>
        <begin position="1"/>
        <end position="678"/>
    </location>
</feature>
<feature type="domain" description="PDEase" evidence="3">
    <location>
        <begin position="281"/>
        <end position="632"/>
    </location>
</feature>
<feature type="region of interest" description="Disordered" evidence="4">
    <location>
        <begin position="1"/>
        <end position="27"/>
    </location>
</feature>
<feature type="region of interest" description="Disordered" evidence="4">
    <location>
        <begin position="52"/>
        <end position="95"/>
    </location>
</feature>
<feature type="region of interest" description="Disordered" evidence="4">
    <location>
        <begin position="223"/>
        <end position="250"/>
    </location>
</feature>
<feature type="region of interest" description="Disordered" evidence="4">
    <location>
        <begin position="654"/>
        <end position="678"/>
    </location>
</feature>
<feature type="compositionally biased region" description="Low complexity" evidence="4">
    <location>
        <begin position="7"/>
        <end position="19"/>
    </location>
</feature>
<feature type="compositionally biased region" description="Polar residues" evidence="4">
    <location>
        <begin position="60"/>
        <end position="85"/>
    </location>
</feature>
<feature type="compositionally biased region" description="Polar residues" evidence="4">
    <location>
        <begin position="231"/>
        <end position="246"/>
    </location>
</feature>
<feature type="active site" description="Proton donor" evidence="3">
    <location>
        <position position="356"/>
    </location>
</feature>
<feature type="binding site" evidence="3">
    <location>
        <position position="360"/>
    </location>
    <ligand>
        <name>a divalent metal cation</name>
        <dbReference type="ChEBI" id="CHEBI:60240"/>
        <label>1</label>
    </ligand>
</feature>
<feature type="binding site" evidence="3">
    <location>
        <position position="421"/>
    </location>
    <ligand>
        <name>a divalent metal cation</name>
        <dbReference type="ChEBI" id="CHEBI:60240"/>
        <label>1</label>
    </ligand>
</feature>
<feature type="binding site" evidence="3">
    <location>
        <position position="422"/>
    </location>
    <ligand>
        <name>a divalent metal cation</name>
        <dbReference type="ChEBI" id="CHEBI:60240"/>
        <label>1</label>
    </ligand>
</feature>
<feature type="binding site" evidence="3">
    <location>
        <position position="422"/>
    </location>
    <ligand>
        <name>a divalent metal cation</name>
        <dbReference type="ChEBI" id="CHEBI:60240"/>
        <label>2</label>
    </ligand>
</feature>
<feature type="binding site" evidence="3">
    <location>
        <position position="531"/>
    </location>
    <ligand>
        <name>a divalent metal cation</name>
        <dbReference type="ChEBI" id="CHEBI:60240"/>
        <label>1</label>
    </ligand>
</feature>
<feature type="splice variant" id="VSP_053658" description="In isoform a." evidence="6">
    <location>
        <begin position="1"/>
        <end position="221"/>
    </location>
</feature>
<feature type="splice variant" id="VSP_053659" description="In isoform d." evidence="6">
    <location>
        <begin position="1"/>
        <end position="186"/>
    </location>
</feature>
<feature type="splice variant" id="VSP_053660" description="In isoform c." evidence="6">
    <location>
        <begin position="1"/>
        <end position="104"/>
    </location>
</feature>
<feature type="splice variant" id="VSP_053661" description="In isoform b." evidence="6">
    <location>
        <begin position="1"/>
        <end position="53"/>
    </location>
</feature>
<feature type="splice variant" id="VSP_053662" description="In isoform c." evidence="6">
    <original>HMQRTFHEAMRQRRTSLPANSLSLNGAKVTGSSLSEAKGLIADMLMNKELPGNVASCLRAVTMLLEQRPLPLNGLLNDFGLPSVVENPYGGESMVVG</original>
    <variation>MFPFRRSESHSPASRCKSAGLPIATTNGFHSIPSSASSSTQSINRQGSVDNLIFKLLTKKYMAKCLGFTPSRSSVAIQTTPVVEVAPVIGQQNEGDK</variation>
    <location>
        <begin position="105"/>
        <end position="201"/>
    </location>
</feature>
<feature type="splice variant" id="VSP_053663" description="In isoform d." evidence="6">
    <original>SVVENPYGGESMVVGASKPRISNITFSTVTSATGLPTVPAEPNKARSS</original>
    <variation>MMSSPSTSRCGHGGVAPADANGKEIQPFGVLVVNKLQKRVNSPLTAFA</variation>
    <location>
        <begin position="187"/>
        <end position="234"/>
    </location>
</feature>
<feature type="splice variant" id="VSP_053664" description="In isoform a." evidence="6">
    <original>PTVPAEPNKARSS</original>
    <variation>MNSKVFKSKKNFC</variation>
    <location>
        <begin position="222"/>
        <end position="234"/>
    </location>
</feature>
<feature type="splice variant" id="VSP_053665" description="In isoform a, isoform c and isoform d." evidence="6">
    <original>Q</original>
    <variation>QVPFTICCSIAEEEYV</variation>
    <location>
        <position position="678"/>
    </location>
</feature>
<organism>
    <name type="scientific">Caenorhabditis elegans</name>
    <dbReference type="NCBI Taxonomy" id="6239"/>
    <lineage>
        <taxon>Eukaryota</taxon>
        <taxon>Metazoa</taxon>
        <taxon>Ecdysozoa</taxon>
        <taxon>Nematoda</taxon>
        <taxon>Chromadorea</taxon>
        <taxon>Rhabditida</taxon>
        <taxon>Rhabditina</taxon>
        <taxon>Rhabditomorpha</taxon>
        <taxon>Rhabditoidea</taxon>
        <taxon>Rhabditidae</taxon>
        <taxon>Peloderinae</taxon>
        <taxon>Caenorhabditis</taxon>
    </lineage>
</organism>
<gene>
    <name type="primary">pde-3</name>
    <name type="ORF">E01F3.1</name>
</gene>
<accession>Q8I0P7</accession>
<accession>B7FAS9</accession>
<accession>B7FAT0</accession>
<accession>G5EG24</accession>
<accession>Q9BH44</accession>
<reference key="1">
    <citation type="journal article" date="1998" name="Science">
        <title>Genome sequence of the nematode C. elegans: a platform for investigating biology.</title>
        <authorList>
            <consortium name="The C. elegans sequencing consortium"/>
        </authorList>
    </citation>
    <scope>NUCLEOTIDE SEQUENCE [LARGE SCALE GENOMIC DNA]</scope>
    <scope>ALTERNATIVE SPLICING</scope>
    <source>
        <strain>Bristol N2</strain>
    </source>
</reference>
<keyword id="KW-0025">Alternative splicing</keyword>
<keyword id="KW-0140">cGMP</keyword>
<keyword id="KW-0378">Hydrolase</keyword>
<keyword id="KW-0479">Metal-binding</keyword>
<keyword id="KW-1185">Reference proteome</keyword>